<comment type="function">
    <text evidence="1">Involved in the gluconeogenesis. Catalyzes stereospecifically the conversion of dihydroxyacetone phosphate (DHAP) to D-glyceraldehyde-3-phosphate (G3P).</text>
</comment>
<comment type="catalytic activity">
    <reaction evidence="1">
        <text>D-glyceraldehyde 3-phosphate = dihydroxyacetone phosphate</text>
        <dbReference type="Rhea" id="RHEA:18585"/>
        <dbReference type="ChEBI" id="CHEBI:57642"/>
        <dbReference type="ChEBI" id="CHEBI:59776"/>
        <dbReference type="EC" id="5.3.1.1"/>
    </reaction>
</comment>
<comment type="pathway">
    <text evidence="1">Carbohydrate biosynthesis; gluconeogenesis.</text>
</comment>
<comment type="pathway">
    <text evidence="1">Carbohydrate degradation; glycolysis; D-glyceraldehyde 3-phosphate from glycerone phosphate: step 1/1.</text>
</comment>
<comment type="subunit">
    <text evidence="1">Homodimer.</text>
</comment>
<comment type="subcellular location">
    <subcellularLocation>
        <location evidence="1">Cytoplasm</location>
    </subcellularLocation>
</comment>
<comment type="similarity">
    <text evidence="1">Belongs to the triosephosphate isomerase family.</text>
</comment>
<reference key="1">
    <citation type="journal article" date="1996" name="Nucleic Acids Res.">
        <title>Complete sequence analysis of the genome of the bacterium Mycoplasma pneumoniae.</title>
        <authorList>
            <person name="Himmelreich R."/>
            <person name="Hilbert H."/>
            <person name="Plagens H."/>
            <person name="Pirkl E."/>
            <person name="Li B.-C."/>
            <person name="Herrmann R."/>
        </authorList>
    </citation>
    <scope>NUCLEOTIDE SEQUENCE [LARGE SCALE GENOMIC DNA]</scope>
    <source>
        <strain>ATCC 29342 / M129 / Subtype 1</strain>
    </source>
</reference>
<keyword id="KW-0963">Cytoplasm</keyword>
<keyword id="KW-0312">Gluconeogenesis</keyword>
<keyword id="KW-0324">Glycolysis</keyword>
<keyword id="KW-0413">Isomerase</keyword>
<keyword id="KW-1185">Reference proteome</keyword>
<accession>P78010</accession>
<evidence type="ECO:0000255" key="1">
    <source>
        <dbReference type="HAMAP-Rule" id="MF_00147"/>
    </source>
</evidence>
<dbReference type="EC" id="5.3.1.1" evidence="1"/>
<dbReference type="EMBL" id="U00089">
    <property type="protein sequence ID" value="AAB95861.1"/>
    <property type="molecule type" value="Genomic_DNA"/>
</dbReference>
<dbReference type="PIR" id="S73539">
    <property type="entry name" value="S73539"/>
</dbReference>
<dbReference type="RefSeq" id="NP_110318.1">
    <property type="nucleotide sequence ID" value="NC_000912.1"/>
</dbReference>
<dbReference type="RefSeq" id="WP_010874986.1">
    <property type="nucleotide sequence ID" value="NZ_OU342337.1"/>
</dbReference>
<dbReference type="SMR" id="P78010"/>
<dbReference type="IntAct" id="P78010">
    <property type="interactions" value="2"/>
</dbReference>
<dbReference type="STRING" id="272634.MPN_629"/>
<dbReference type="EnsemblBacteria" id="AAB95861">
    <property type="protein sequence ID" value="AAB95861"/>
    <property type="gene ID" value="MPN_629"/>
</dbReference>
<dbReference type="GeneID" id="66608685"/>
<dbReference type="KEGG" id="mpn:MPN_629"/>
<dbReference type="PATRIC" id="fig|272634.6.peg.693"/>
<dbReference type="HOGENOM" id="CLU_024251_2_3_14"/>
<dbReference type="OrthoDB" id="9809429at2"/>
<dbReference type="BioCyc" id="MetaCyc:MONOMER-547"/>
<dbReference type="BioCyc" id="MPNE272634:G1GJ3-1010-MONOMER"/>
<dbReference type="UniPathway" id="UPA00109">
    <property type="reaction ID" value="UER00189"/>
</dbReference>
<dbReference type="UniPathway" id="UPA00138"/>
<dbReference type="Proteomes" id="UP000000808">
    <property type="component" value="Chromosome"/>
</dbReference>
<dbReference type="GO" id="GO:0005829">
    <property type="term" value="C:cytosol"/>
    <property type="evidence" value="ECO:0007669"/>
    <property type="project" value="TreeGrafter"/>
</dbReference>
<dbReference type="GO" id="GO:0004807">
    <property type="term" value="F:triose-phosphate isomerase activity"/>
    <property type="evidence" value="ECO:0007669"/>
    <property type="project" value="UniProtKB-UniRule"/>
</dbReference>
<dbReference type="GO" id="GO:0006094">
    <property type="term" value="P:gluconeogenesis"/>
    <property type="evidence" value="ECO:0007669"/>
    <property type="project" value="UniProtKB-UniRule"/>
</dbReference>
<dbReference type="GO" id="GO:0046166">
    <property type="term" value="P:glyceraldehyde-3-phosphate biosynthetic process"/>
    <property type="evidence" value="ECO:0007669"/>
    <property type="project" value="TreeGrafter"/>
</dbReference>
<dbReference type="GO" id="GO:0019563">
    <property type="term" value="P:glycerol catabolic process"/>
    <property type="evidence" value="ECO:0007669"/>
    <property type="project" value="TreeGrafter"/>
</dbReference>
<dbReference type="GO" id="GO:0006096">
    <property type="term" value="P:glycolytic process"/>
    <property type="evidence" value="ECO:0007669"/>
    <property type="project" value="UniProtKB-UniRule"/>
</dbReference>
<dbReference type="CDD" id="cd00311">
    <property type="entry name" value="TIM"/>
    <property type="match status" value="1"/>
</dbReference>
<dbReference type="FunFam" id="3.20.20.70:FF:000016">
    <property type="entry name" value="Triosephosphate isomerase"/>
    <property type="match status" value="1"/>
</dbReference>
<dbReference type="Gene3D" id="3.20.20.70">
    <property type="entry name" value="Aldolase class I"/>
    <property type="match status" value="1"/>
</dbReference>
<dbReference type="HAMAP" id="MF_00147_B">
    <property type="entry name" value="TIM_B"/>
    <property type="match status" value="1"/>
</dbReference>
<dbReference type="InterPro" id="IPR013785">
    <property type="entry name" value="Aldolase_TIM"/>
</dbReference>
<dbReference type="InterPro" id="IPR035990">
    <property type="entry name" value="TIM_sf"/>
</dbReference>
<dbReference type="InterPro" id="IPR022896">
    <property type="entry name" value="TrioseP_Isoase_bac/euk"/>
</dbReference>
<dbReference type="InterPro" id="IPR000652">
    <property type="entry name" value="Triosephosphate_isomerase"/>
</dbReference>
<dbReference type="InterPro" id="IPR020861">
    <property type="entry name" value="Triosephosphate_isomerase_AS"/>
</dbReference>
<dbReference type="NCBIfam" id="TIGR00419">
    <property type="entry name" value="tim"/>
    <property type="match status" value="1"/>
</dbReference>
<dbReference type="PANTHER" id="PTHR21139">
    <property type="entry name" value="TRIOSEPHOSPHATE ISOMERASE"/>
    <property type="match status" value="1"/>
</dbReference>
<dbReference type="PANTHER" id="PTHR21139:SF42">
    <property type="entry name" value="TRIOSEPHOSPHATE ISOMERASE"/>
    <property type="match status" value="1"/>
</dbReference>
<dbReference type="Pfam" id="PF00121">
    <property type="entry name" value="TIM"/>
    <property type="match status" value="1"/>
</dbReference>
<dbReference type="SUPFAM" id="SSF51351">
    <property type="entry name" value="Triosephosphate isomerase (TIM)"/>
    <property type="match status" value="1"/>
</dbReference>
<dbReference type="PROSITE" id="PS00171">
    <property type="entry name" value="TIM_1"/>
    <property type="match status" value="1"/>
</dbReference>
<dbReference type="PROSITE" id="PS51440">
    <property type="entry name" value="TIM_2"/>
    <property type="match status" value="1"/>
</dbReference>
<proteinExistence type="inferred from homology"/>
<feature type="chain" id="PRO_0000090254" description="Triosephosphate isomerase">
    <location>
        <begin position="1"/>
        <end position="244"/>
    </location>
</feature>
<feature type="active site" description="Electrophile" evidence="1">
    <location>
        <position position="93"/>
    </location>
</feature>
<feature type="active site" description="Proton acceptor" evidence="1">
    <location>
        <position position="160"/>
    </location>
</feature>
<feature type="binding site" evidence="1">
    <location>
        <begin position="9"/>
        <end position="11"/>
    </location>
    <ligand>
        <name>substrate</name>
    </ligand>
</feature>
<feature type="binding site" evidence="1">
    <location>
        <position position="166"/>
    </location>
    <ligand>
        <name>substrate</name>
    </ligand>
</feature>
<feature type="binding site" evidence="1">
    <location>
        <position position="206"/>
    </location>
    <ligand>
        <name>substrate</name>
    </ligand>
</feature>
<gene>
    <name evidence="1" type="primary">tpiA</name>
    <name type="synonym">tim</name>
    <name type="synonym">tpi</name>
    <name type="ordered locus">MPN_629</name>
    <name type="ORF">MP213</name>
</gene>
<sequence>MRTKYLIGNWKTNKDLHQALAFVEQFKQHPAKTKAVLGIAPVHVHLTEVNKVLPNNLLLLAQDANFIASGSYTGTVSYTQLQDIKVNSVIIGHSERRKYFNETAQVINQKLKACLQAGMLVVLCIGETEGQPISFLKEDLTQVLQGIDLSLLKQLVIAYEPIWAIGTGKTATPEIANNTIAQIRVYLSELYNKEIAQQTSILYGGSVAKDNIKELAQTEQIDGFLVGKASLDVNDFLVMAQVYA</sequence>
<organism>
    <name type="scientific">Mycoplasma pneumoniae (strain ATCC 29342 / M129 / Subtype 1)</name>
    <name type="common">Mycoplasmoides pneumoniae</name>
    <dbReference type="NCBI Taxonomy" id="272634"/>
    <lineage>
        <taxon>Bacteria</taxon>
        <taxon>Bacillati</taxon>
        <taxon>Mycoplasmatota</taxon>
        <taxon>Mycoplasmoidales</taxon>
        <taxon>Mycoplasmoidaceae</taxon>
        <taxon>Mycoplasmoides</taxon>
    </lineage>
</organism>
<name>TPIS_MYCPN</name>
<protein>
    <recommendedName>
        <fullName evidence="1">Triosephosphate isomerase</fullName>
        <shortName evidence="1">TIM</shortName>
        <shortName evidence="1">TPI</shortName>
        <ecNumber evidence="1">5.3.1.1</ecNumber>
    </recommendedName>
    <alternativeName>
        <fullName evidence="1">Triose-phosphate isomerase</fullName>
    </alternativeName>
</protein>